<organism>
    <name type="scientific">Halothermothrix orenii (strain H 168 / OCM 544 / DSM 9562)</name>
    <dbReference type="NCBI Taxonomy" id="373903"/>
    <lineage>
        <taxon>Bacteria</taxon>
        <taxon>Bacillati</taxon>
        <taxon>Bacillota</taxon>
        <taxon>Clostridia</taxon>
        <taxon>Halanaerobiales</taxon>
        <taxon>Halothermotrichaceae</taxon>
        <taxon>Halothermothrix</taxon>
    </lineage>
</organism>
<protein>
    <recommendedName>
        <fullName evidence="1">SsrA-binding protein</fullName>
    </recommendedName>
    <alternativeName>
        <fullName evidence="1">Small protein B</fullName>
    </alternativeName>
</protein>
<accession>B8CYF2</accession>
<dbReference type="EMBL" id="CP001098">
    <property type="protein sequence ID" value="ACL70321.1"/>
    <property type="molecule type" value="Genomic_DNA"/>
</dbReference>
<dbReference type="RefSeq" id="WP_012636504.1">
    <property type="nucleotide sequence ID" value="NC_011899.1"/>
</dbReference>
<dbReference type="SMR" id="B8CYF2"/>
<dbReference type="STRING" id="373903.Hore_15720"/>
<dbReference type="KEGG" id="hor:Hore_15720"/>
<dbReference type="eggNOG" id="COG0691">
    <property type="taxonomic scope" value="Bacteria"/>
</dbReference>
<dbReference type="HOGENOM" id="CLU_108953_0_0_9"/>
<dbReference type="OrthoDB" id="9805462at2"/>
<dbReference type="Proteomes" id="UP000000719">
    <property type="component" value="Chromosome"/>
</dbReference>
<dbReference type="GO" id="GO:0005829">
    <property type="term" value="C:cytosol"/>
    <property type="evidence" value="ECO:0007669"/>
    <property type="project" value="TreeGrafter"/>
</dbReference>
<dbReference type="GO" id="GO:0003723">
    <property type="term" value="F:RNA binding"/>
    <property type="evidence" value="ECO:0007669"/>
    <property type="project" value="UniProtKB-UniRule"/>
</dbReference>
<dbReference type="GO" id="GO:0070929">
    <property type="term" value="P:trans-translation"/>
    <property type="evidence" value="ECO:0007669"/>
    <property type="project" value="UniProtKB-UniRule"/>
</dbReference>
<dbReference type="CDD" id="cd09294">
    <property type="entry name" value="SmpB"/>
    <property type="match status" value="1"/>
</dbReference>
<dbReference type="Gene3D" id="2.40.280.10">
    <property type="match status" value="1"/>
</dbReference>
<dbReference type="HAMAP" id="MF_00023">
    <property type="entry name" value="SmpB"/>
    <property type="match status" value="1"/>
</dbReference>
<dbReference type="InterPro" id="IPR023620">
    <property type="entry name" value="SmpB"/>
</dbReference>
<dbReference type="InterPro" id="IPR000037">
    <property type="entry name" value="SsrA-bd_prot"/>
</dbReference>
<dbReference type="InterPro" id="IPR020081">
    <property type="entry name" value="SsrA-bd_prot_CS"/>
</dbReference>
<dbReference type="NCBIfam" id="NF003843">
    <property type="entry name" value="PRK05422.1"/>
    <property type="match status" value="1"/>
</dbReference>
<dbReference type="NCBIfam" id="TIGR00086">
    <property type="entry name" value="smpB"/>
    <property type="match status" value="1"/>
</dbReference>
<dbReference type="PANTHER" id="PTHR30308:SF2">
    <property type="entry name" value="SSRA-BINDING PROTEIN"/>
    <property type="match status" value="1"/>
</dbReference>
<dbReference type="PANTHER" id="PTHR30308">
    <property type="entry name" value="TMRNA-BINDING COMPONENT OF TRANS-TRANSLATION TAGGING COMPLEX"/>
    <property type="match status" value="1"/>
</dbReference>
<dbReference type="Pfam" id="PF01668">
    <property type="entry name" value="SmpB"/>
    <property type="match status" value="1"/>
</dbReference>
<dbReference type="SUPFAM" id="SSF74982">
    <property type="entry name" value="Small protein B (SmpB)"/>
    <property type="match status" value="1"/>
</dbReference>
<dbReference type="PROSITE" id="PS01317">
    <property type="entry name" value="SSRP"/>
    <property type="match status" value="1"/>
</dbReference>
<feature type="chain" id="PRO_1000116867" description="SsrA-binding protein">
    <location>
        <begin position="1"/>
        <end position="155"/>
    </location>
</feature>
<comment type="function">
    <text evidence="1">Required for rescue of stalled ribosomes mediated by trans-translation. Binds to transfer-messenger RNA (tmRNA), required for stable association of tmRNA with ribosomes. tmRNA and SmpB together mimic tRNA shape, replacing the anticodon stem-loop with SmpB. tmRNA is encoded by the ssrA gene; the 2 termini fold to resemble tRNA(Ala) and it encodes a 'tag peptide', a short internal open reading frame. During trans-translation Ala-aminoacylated tmRNA acts like a tRNA, entering the A-site of stalled ribosomes, displacing the stalled mRNA. The ribosome then switches to translate the ORF on the tmRNA; the nascent peptide is terminated with the 'tag peptide' encoded by the tmRNA and targeted for degradation. The ribosome is freed to recommence translation, which seems to be the essential function of trans-translation.</text>
</comment>
<comment type="subcellular location">
    <subcellularLocation>
        <location evidence="1">Cytoplasm</location>
    </subcellularLocation>
    <text evidence="1">The tmRNA-SmpB complex associates with stalled 70S ribosomes.</text>
</comment>
<comment type="similarity">
    <text evidence="1">Belongs to the SmpB family.</text>
</comment>
<keyword id="KW-0963">Cytoplasm</keyword>
<keyword id="KW-1185">Reference proteome</keyword>
<keyword id="KW-0694">RNA-binding</keyword>
<sequence length="155" mass="18276">MGQDNIKVIARNKKARHDFFIEETYESGIILRGTEIKSVREGRVNLKDSFALVENGEVFLYNMHISPYKQGNRYNHDPGRKRKLLLHKSEIRKLIGKTKQRGYSLVPLSIYLKNNLAKIELALAKGKKKYDKRQEIAKKTAEREIRRAFKERQRY</sequence>
<proteinExistence type="inferred from homology"/>
<evidence type="ECO:0000255" key="1">
    <source>
        <dbReference type="HAMAP-Rule" id="MF_00023"/>
    </source>
</evidence>
<name>SSRP_HALOH</name>
<gene>
    <name evidence="1" type="primary">smpB</name>
    <name type="ordered locus">Hore_15720</name>
</gene>
<reference key="1">
    <citation type="journal article" date="2009" name="PLoS ONE">
        <title>Genome analysis of the anaerobic thermohalophilic bacterium Halothermothrix orenii.</title>
        <authorList>
            <person name="Mavromatis K."/>
            <person name="Ivanova N."/>
            <person name="Anderson I."/>
            <person name="Lykidis A."/>
            <person name="Hooper S.D."/>
            <person name="Sun H."/>
            <person name="Kunin V."/>
            <person name="Lapidus A."/>
            <person name="Hugenholtz P."/>
            <person name="Patel B."/>
            <person name="Kyrpides N.C."/>
        </authorList>
    </citation>
    <scope>NUCLEOTIDE SEQUENCE [LARGE SCALE GENOMIC DNA]</scope>
    <source>
        <strain>H 168 / OCM 544 / DSM 9562</strain>
    </source>
</reference>